<reference key="1">
    <citation type="journal article" date="2001" name="Science">
        <title>Comparative genomics of Listeria species.</title>
        <authorList>
            <person name="Glaser P."/>
            <person name="Frangeul L."/>
            <person name="Buchrieser C."/>
            <person name="Rusniok C."/>
            <person name="Amend A."/>
            <person name="Baquero F."/>
            <person name="Berche P."/>
            <person name="Bloecker H."/>
            <person name="Brandt P."/>
            <person name="Chakraborty T."/>
            <person name="Charbit A."/>
            <person name="Chetouani F."/>
            <person name="Couve E."/>
            <person name="de Daruvar A."/>
            <person name="Dehoux P."/>
            <person name="Domann E."/>
            <person name="Dominguez-Bernal G."/>
            <person name="Duchaud E."/>
            <person name="Durant L."/>
            <person name="Dussurget O."/>
            <person name="Entian K.-D."/>
            <person name="Fsihi H."/>
            <person name="Garcia-del Portillo F."/>
            <person name="Garrido P."/>
            <person name="Gautier L."/>
            <person name="Goebel W."/>
            <person name="Gomez-Lopez N."/>
            <person name="Hain T."/>
            <person name="Hauf J."/>
            <person name="Jackson D."/>
            <person name="Jones L.-M."/>
            <person name="Kaerst U."/>
            <person name="Kreft J."/>
            <person name="Kuhn M."/>
            <person name="Kunst F."/>
            <person name="Kurapkat G."/>
            <person name="Madueno E."/>
            <person name="Maitournam A."/>
            <person name="Mata Vicente J."/>
            <person name="Ng E."/>
            <person name="Nedjari H."/>
            <person name="Nordsiek G."/>
            <person name="Novella S."/>
            <person name="de Pablos B."/>
            <person name="Perez-Diaz J.-C."/>
            <person name="Purcell R."/>
            <person name="Remmel B."/>
            <person name="Rose M."/>
            <person name="Schlueter T."/>
            <person name="Simoes N."/>
            <person name="Tierrez A."/>
            <person name="Vazquez-Boland J.-A."/>
            <person name="Voss H."/>
            <person name="Wehland J."/>
            <person name="Cossart P."/>
        </authorList>
    </citation>
    <scope>NUCLEOTIDE SEQUENCE [LARGE SCALE GENOMIC DNA]</scope>
    <source>
        <strain>ATCC BAA-679 / EGD-e</strain>
    </source>
</reference>
<feature type="chain" id="PRO_0000132407" description="Small ribosomal subunit protein uS4">
    <location>
        <begin position="1"/>
        <end position="200"/>
    </location>
</feature>
<feature type="domain" description="S4 RNA-binding" evidence="1">
    <location>
        <begin position="92"/>
        <end position="170"/>
    </location>
</feature>
<feature type="region of interest" description="Disordered" evidence="2">
    <location>
        <begin position="22"/>
        <end position="43"/>
    </location>
</feature>
<dbReference type="EMBL" id="AL591979">
    <property type="protein sequence ID" value="CAC99674.1"/>
    <property type="molecule type" value="Genomic_DNA"/>
</dbReference>
<dbReference type="PIR" id="AD1274">
    <property type="entry name" value="AD1274"/>
</dbReference>
<dbReference type="RefSeq" id="NP_465121.1">
    <property type="nucleotide sequence ID" value="NC_003210.1"/>
</dbReference>
<dbReference type="RefSeq" id="WP_010989757.1">
    <property type="nucleotide sequence ID" value="NC_003210.1"/>
</dbReference>
<dbReference type="PDB" id="7NHN">
    <property type="method" value="EM"/>
    <property type="resolution" value="2.90 A"/>
    <property type="chains" value="e=1-200"/>
</dbReference>
<dbReference type="PDBsum" id="7NHN"/>
<dbReference type="EMDB" id="EMD-12334"/>
<dbReference type="SMR" id="Q8Y6T6"/>
<dbReference type="STRING" id="169963.gene:17594253"/>
<dbReference type="PaxDb" id="169963-lmo1596"/>
<dbReference type="EnsemblBacteria" id="CAC99674">
    <property type="protein sequence ID" value="CAC99674"/>
    <property type="gene ID" value="CAC99674"/>
</dbReference>
<dbReference type="GeneID" id="985744"/>
<dbReference type="KEGG" id="lmo:lmo1596"/>
<dbReference type="PATRIC" id="fig|169963.11.peg.1638"/>
<dbReference type="eggNOG" id="COG0522">
    <property type="taxonomic scope" value="Bacteria"/>
</dbReference>
<dbReference type="HOGENOM" id="CLU_092403_0_1_9"/>
<dbReference type="OrthoDB" id="9803672at2"/>
<dbReference type="PhylomeDB" id="Q8Y6T6"/>
<dbReference type="BioCyc" id="LMON169963:LMO1596-MONOMER"/>
<dbReference type="Proteomes" id="UP000000817">
    <property type="component" value="Chromosome"/>
</dbReference>
<dbReference type="GO" id="GO:0015935">
    <property type="term" value="C:small ribosomal subunit"/>
    <property type="evidence" value="ECO:0000318"/>
    <property type="project" value="GO_Central"/>
</dbReference>
<dbReference type="GO" id="GO:0019843">
    <property type="term" value="F:rRNA binding"/>
    <property type="evidence" value="ECO:0000318"/>
    <property type="project" value="GO_Central"/>
</dbReference>
<dbReference type="GO" id="GO:0003735">
    <property type="term" value="F:structural constituent of ribosome"/>
    <property type="evidence" value="ECO:0000318"/>
    <property type="project" value="GO_Central"/>
</dbReference>
<dbReference type="GO" id="GO:0042274">
    <property type="term" value="P:ribosomal small subunit biogenesis"/>
    <property type="evidence" value="ECO:0000318"/>
    <property type="project" value="GO_Central"/>
</dbReference>
<dbReference type="GO" id="GO:0006412">
    <property type="term" value="P:translation"/>
    <property type="evidence" value="ECO:0007669"/>
    <property type="project" value="UniProtKB-UniRule"/>
</dbReference>
<dbReference type="CDD" id="cd00165">
    <property type="entry name" value="S4"/>
    <property type="match status" value="1"/>
</dbReference>
<dbReference type="FunFam" id="1.10.1050.10:FF:000001">
    <property type="entry name" value="30S ribosomal protein S4"/>
    <property type="match status" value="1"/>
</dbReference>
<dbReference type="FunFam" id="3.10.290.10:FF:000001">
    <property type="entry name" value="30S ribosomal protein S4"/>
    <property type="match status" value="1"/>
</dbReference>
<dbReference type="Gene3D" id="1.10.1050.10">
    <property type="entry name" value="Ribosomal Protein S4 Delta 41, Chain A, domain 1"/>
    <property type="match status" value="1"/>
</dbReference>
<dbReference type="Gene3D" id="3.10.290.10">
    <property type="entry name" value="RNA-binding S4 domain"/>
    <property type="match status" value="1"/>
</dbReference>
<dbReference type="HAMAP" id="MF_01306_B">
    <property type="entry name" value="Ribosomal_uS4_B"/>
    <property type="match status" value="1"/>
</dbReference>
<dbReference type="InterPro" id="IPR022801">
    <property type="entry name" value="Ribosomal_uS4"/>
</dbReference>
<dbReference type="InterPro" id="IPR005709">
    <property type="entry name" value="Ribosomal_uS4_bac-type"/>
</dbReference>
<dbReference type="InterPro" id="IPR018079">
    <property type="entry name" value="Ribosomal_uS4_CS"/>
</dbReference>
<dbReference type="InterPro" id="IPR001912">
    <property type="entry name" value="Ribosomal_uS4_N"/>
</dbReference>
<dbReference type="InterPro" id="IPR002942">
    <property type="entry name" value="S4_RNA-bd"/>
</dbReference>
<dbReference type="InterPro" id="IPR036986">
    <property type="entry name" value="S4_RNA-bd_sf"/>
</dbReference>
<dbReference type="NCBIfam" id="NF003717">
    <property type="entry name" value="PRK05327.1"/>
    <property type="match status" value="1"/>
</dbReference>
<dbReference type="NCBIfam" id="TIGR01017">
    <property type="entry name" value="rpsD_bact"/>
    <property type="match status" value="1"/>
</dbReference>
<dbReference type="PANTHER" id="PTHR11831">
    <property type="entry name" value="30S 40S RIBOSOMAL PROTEIN"/>
    <property type="match status" value="1"/>
</dbReference>
<dbReference type="PANTHER" id="PTHR11831:SF4">
    <property type="entry name" value="SMALL RIBOSOMAL SUBUNIT PROTEIN US4M"/>
    <property type="match status" value="1"/>
</dbReference>
<dbReference type="Pfam" id="PF00163">
    <property type="entry name" value="Ribosomal_S4"/>
    <property type="match status" value="1"/>
</dbReference>
<dbReference type="Pfam" id="PF01479">
    <property type="entry name" value="S4"/>
    <property type="match status" value="1"/>
</dbReference>
<dbReference type="SMART" id="SM01390">
    <property type="entry name" value="Ribosomal_S4"/>
    <property type="match status" value="1"/>
</dbReference>
<dbReference type="SMART" id="SM00363">
    <property type="entry name" value="S4"/>
    <property type="match status" value="1"/>
</dbReference>
<dbReference type="SUPFAM" id="SSF55174">
    <property type="entry name" value="Alpha-L RNA-binding motif"/>
    <property type="match status" value="1"/>
</dbReference>
<dbReference type="PROSITE" id="PS00632">
    <property type="entry name" value="RIBOSOMAL_S4"/>
    <property type="match status" value="1"/>
</dbReference>
<dbReference type="PROSITE" id="PS50889">
    <property type="entry name" value="S4"/>
    <property type="match status" value="1"/>
</dbReference>
<sequence length="200" mass="22735">MARYTGPSWKVSRRLGISLSGTGKELERRPYAPGQHGPTQRKKISEYGLQQAEKQKLRHMYGLTERQFKNTFNKAGKLRGKHGENFMILLEQRLDNIVYRLGLARTRRAARQLVNHGHITVDGKRVDIPSYQVSVGQVISVREKSAKNSAIAESLEVSSFVPEYVTFDAEKLTGSLNRLPERSELAAEINEAFIVEFYSR</sequence>
<proteinExistence type="evidence at protein level"/>
<accession>Q8Y6T6</accession>
<gene>
    <name evidence="1" type="primary">rpsD</name>
    <name type="ordered locus">lmo1596</name>
</gene>
<protein>
    <recommendedName>
        <fullName evidence="1">Small ribosomal subunit protein uS4</fullName>
    </recommendedName>
    <alternativeName>
        <fullName evidence="3">30S ribosomal protein S4</fullName>
    </alternativeName>
</protein>
<organism>
    <name type="scientific">Listeria monocytogenes serovar 1/2a (strain ATCC BAA-679 / EGD-e)</name>
    <dbReference type="NCBI Taxonomy" id="169963"/>
    <lineage>
        <taxon>Bacteria</taxon>
        <taxon>Bacillati</taxon>
        <taxon>Bacillota</taxon>
        <taxon>Bacilli</taxon>
        <taxon>Bacillales</taxon>
        <taxon>Listeriaceae</taxon>
        <taxon>Listeria</taxon>
    </lineage>
</organism>
<keyword id="KW-0002">3D-structure</keyword>
<keyword id="KW-1185">Reference proteome</keyword>
<keyword id="KW-0687">Ribonucleoprotein</keyword>
<keyword id="KW-0689">Ribosomal protein</keyword>
<keyword id="KW-0694">RNA-binding</keyword>
<keyword id="KW-0699">rRNA-binding</keyword>
<comment type="function">
    <text evidence="1">One of the primary rRNA binding proteins, it binds directly to 16S rRNA where it nucleates assembly of the body of the 30S subunit.</text>
</comment>
<comment type="function">
    <text evidence="1">With S5 and S12 plays an important role in translational accuracy.</text>
</comment>
<comment type="subunit">
    <text evidence="1">Part of the 30S ribosomal subunit. Contacts protein S5. The interaction surface between S4 and S5 is involved in control of translational fidelity.</text>
</comment>
<comment type="similarity">
    <text evidence="1">Belongs to the universal ribosomal protein uS4 family.</text>
</comment>
<name>RS4_LISMO</name>
<evidence type="ECO:0000255" key="1">
    <source>
        <dbReference type="HAMAP-Rule" id="MF_01306"/>
    </source>
</evidence>
<evidence type="ECO:0000256" key="2">
    <source>
        <dbReference type="SAM" id="MobiDB-lite"/>
    </source>
</evidence>
<evidence type="ECO:0000305" key="3"/>